<comment type="function">
    <text evidence="1">Involved in deacetylation of histones, chromatin assembly and chromosome segregation. May act as a transcriptional oscillator, directing histone deacetylases to specific chromosomal domains. Component of the NuA4 histone acetyltransferase complex which is involved in transcriptional activation of selected genes principally by acetylation of nucleosomal histone H4 and H2A. The NuA4 complex is also involved in DNA repair (By similarity).</text>
</comment>
<comment type="subunit">
    <text evidence="1">Component of the NuA4 histone acetyltransferase complex.</text>
</comment>
<comment type="subcellular location">
    <subcellularLocation>
        <location evidence="3">Nucleus</location>
    </subcellularLocation>
</comment>
<comment type="similarity">
    <text evidence="5">Belongs to the MRG family.</text>
</comment>
<comment type="sequence caution" evidence="5">
    <conflict type="erroneous initiation">
        <sequence resource="EMBL-CDS" id="AAS51868"/>
    </conflict>
</comment>
<sequence>MAFEIDGKCLCYHGPLLYEARVLRVYDPASQTYRDRTRTGVPLEEEDGLPAESRGREHWFVHYQGWKSTWDEWVGQERIRPYNDENLALKRQLVQDAKAAAAAAKRAKARPGKRERSPAPAAPAAPAQGPRLAVRMPVELKALLVDDWERITKERKLVALPCAPTVGDILDAYYRERTAQLASPVAQTLLHEFVEGVHLYFDQCLSHLLLYRLERLQFDEACGGAAPAASGLPAPPEPRPSAVYGGVHLLRLLSMMPELICGTTMDEKSCHTVVAQCESLLAWMATHADDLVSGDYINTSAQYEGVALGM</sequence>
<protein>
    <recommendedName>
        <fullName>Chromatin modification-related protein EAF3</fullName>
    </recommendedName>
</protein>
<reference key="1">
    <citation type="journal article" date="2004" name="Science">
        <title>The Ashbya gossypii genome as a tool for mapping the ancient Saccharomyces cerevisiae genome.</title>
        <authorList>
            <person name="Dietrich F.S."/>
            <person name="Voegeli S."/>
            <person name="Brachat S."/>
            <person name="Lerch A."/>
            <person name="Gates K."/>
            <person name="Steiner S."/>
            <person name="Mohr C."/>
            <person name="Poehlmann R."/>
            <person name="Luedi P."/>
            <person name="Choi S."/>
            <person name="Wing R.A."/>
            <person name="Flavier A."/>
            <person name="Gaffney T.D."/>
            <person name="Philippsen P."/>
        </authorList>
    </citation>
    <scope>NUCLEOTIDE SEQUENCE [LARGE SCALE GENOMIC DNA]</scope>
    <source>
        <strain>ATCC 10895 / CBS 109.51 / FGSC 9923 / NRRL Y-1056</strain>
    </source>
</reference>
<reference key="2">
    <citation type="journal article" date="2013" name="G3 (Bethesda)">
        <title>Genomes of Ashbya fungi isolated from insects reveal four mating-type loci, numerous translocations, lack of transposons, and distinct gene duplications.</title>
        <authorList>
            <person name="Dietrich F.S."/>
            <person name="Voegeli S."/>
            <person name="Kuo S."/>
            <person name="Philippsen P."/>
        </authorList>
    </citation>
    <scope>GENOME REANNOTATION</scope>
    <source>
        <strain>ATCC 10895 / CBS 109.51 / FGSC 9923 / NRRL Y-1056</strain>
    </source>
</reference>
<organism>
    <name type="scientific">Eremothecium gossypii (strain ATCC 10895 / CBS 109.51 / FGSC 9923 / NRRL Y-1056)</name>
    <name type="common">Yeast</name>
    <name type="synonym">Ashbya gossypii</name>
    <dbReference type="NCBI Taxonomy" id="284811"/>
    <lineage>
        <taxon>Eukaryota</taxon>
        <taxon>Fungi</taxon>
        <taxon>Dikarya</taxon>
        <taxon>Ascomycota</taxon>
        <taxon>Saccharomycotina</taxon>
        <taxon>Saccharomycetes</taxon>
        <taxon>Saccharomycetales</taxon>
        <taxon>Saccharomycetaceae</taxon>
        <taxon>Eremothecium</taxon>
    </lineage>
</organism>
<dbReference type="EMBL" id="AE016817">
    <property type="protein sequence ID" value="AAS51868.1"/>
    <property type="status" value="ALT_INIT"/>
    <property type="molecule type" value="Genomic_DNA"/>
</dbReference>
<dbReference type="RefSeq" id="NP_984044.1">
    <property type="nucleotide sequence ID" value="NM_209397.1"/>
</dbReference>
<dbReference type="SMR" id="Q75AH9"/>
<dbReference type="FunCoup" id="Q75AH9">
    <property type="interactions" value="754"/>
</dbReference>
<dbReference type="STRING" id="284811.Q75AH9"/>
<dbReference type="GeneID" id="4620186"/>
<dbReference type="KEGG" id="ago:AGOS_ADL052W"/>
<dbReference type="eggNOG" id="KOG3001">
    <property type="taxonomic scope" value="Eukaryota"/>
</dbReference>
<dbReference type="InParanoid" id="Q75AH9"/>
<dbReference type="OrthoDB" id="124855at2759"/>
<dbReference type="Proteomes" id="UP000000591">
    <property type="component" value="Chromosome IV"/>
</dbReference>
<dbReference type="GO" id="GO:0035267">
    <property type="term" value="C:NuA4 histone acetyltransferase complex"/>
    <property type="evidence" value="ECO:0000318"/>
    <property type="project" value="GO_Central"/>
</dbReference>
<dbReference type="GO" id="GO:0032221">
    <property type="term" value="C:Rpd3S complex"/>
    <property type="evidence" value="ECO:0000318"/>
    <property type="project" value="GO_Central"/>
</dbReference>
<dbReference type="GO" id="GO:0006325">
    <property type="term" value="P:chromatin organization"/>
    <property type="evidence" value="ECO:0007669"/>
    <property type="project" value="UniProtKB-KW"/>
</dbReference>
<dbReference type="GO" id="GO:0006281">
    <property type="term" value="P:DNA repair"/>
    <property type="evidence" value="ECO:0007669"/>
    <property type="project" value="UniProtKB-KW"/>
</dbReference>
<dbReference type="GO" id="GO:0006355">
    <property type="term" value="P:regulation of DNA-templated transcription"/>
    <property type="evidence" value="ECO:0007669"/>
    <property type="project" value="InterPro"/>
</dbReference>
<dbReference type="Gene3D" id="2.30.30.140">
    <property type="match status" value="1"/>
</dbReference>
<dbReference type="Gene3D" id="1.10.274.30">
    <property type="entry name" value="MRG domain"/>
    <property type="match status" value="1"/>
</dbReference>
<dbReference type="InterPro" id="IPR016197">
    <property type="entry name" value="Chromo-like_dom_sf"/>
</dbReference>
<dbReference type="InterPro" id="IPR008676">
    <property type="entry name" value="MRG"/>
</dbReference>
<dbReference type="InterPro" id="IPR038217">
    <property type="entry name" value="MRG_C_sf"/>
</dbReference>
<dbReference type="InterPro" id="IPR026541">
    <property type="entry name" value="MRG_dom"/>
</dbReference>
<dbReference type="InterPro" id="IPR053820">
    <property type="entry name" value="MSL3_chromo-like"/>
</dbReference>
<dbReference type="PANTHER" id="PTHR10880">
    <property type="entry name" value="MORTALITY FACTOR 4-LIKE PROTEIN"/>
    <property type="match status" value="1"/>
</dbReference>
<dbReference type="PANTHER" id="PTHR10880:SF15">
    <property type="entry name" value="MSL COMPLEX SUBUNIT 3"/>
    <property type="match status" value="1"/>
</dbReference>
<dbReference type="Pfam" id="PF05712">
    <property type="entry name" value="MRG"/>
    <property type="match status" value="1"/>
</dbReference>
<dbReference type="Pfam" id="PF22732">
    <property type="entry name" value="MSL3_chromo-like"/>
    <property type="match status" value="1"/>
</dbReference>
<dbReference type="PIRSF" id="PIRSF038133">
    <property type="entry name" value="HAT_Nua4_EAF3/MRG15"/>
    <property type="match status" value="1"/>
</dbReference>
<dbReference type="SUPFAM" id="SSF54160">
    <property type="entry name" value="Chromo domain-like"/>
    <property type="match status" value="1"/>
</dbReference>
<dbReference type="PROSITE" id="PS51640">
    <property type="entry name" value="MRG"/>
    <property type="match status" value="1"/>
</dbReference>
<proteinExistence type="inferred from homology"/>
<evidence type="ECO:0000250" key="1"/>
<evidence type="ECO:0000255" key="2"/>
<evidence type="ECO:0000255" key="3">
    <source>
        <dbReference type="PROSITE-ProRule" id="PRU00972"/>
    </source>
</evidence>
<evidence type="ECO:0000256" key="4">
    <source>
        <dbReference type="SAM" id="MobiDB-lite"/>
    </source>
</evidence>
<evidence type="ECO:0000305" key="5"/>
<keyword id="KW-0156">Chromatin regulator</keyword>
<keyword id="KW-0227">DNA damage</keyword>
<keyword id="KW-0234">DNA repair</keyword>
<keyword id="KW-0539">Nucleus</keyword>
<keyword id="KW-1185">Reference proteome</keyword>
<keyword id="KW-0804">Transcription</keyword>
<keyword id="KW-0805">Transcription regulation</keyword>
<gene>
    <name type="primary">EAF3</name>
    <name type="ordered locus">ADL052W</name>
</gene>
<name>EAF3_EREGS</name>
<feature type="chain" id="PRO_0000088772" description="Chromatin modification-related protein EAF3">
    <location>
        <begin position="1"/>
        <end position="310"/>
    </location>
</feature>
<feature type="domain" description="Tudor-knot" evidence="2">
    <location>
        <begin position="8"/>
        <end position="80"/>
    </location>
</feature>
<feature type="domain" description="MRG" evidence="3">
    <location>
        <begin position="128"/>
        <end position="308"/>
    </location>
</feature>
<feature type="region of interest" description="Disordered" evidence="4">
    <location>
        <begin position="104"/>
        <end position="128"/>
    </location>
</feature>
<feature type="compositionally biased region" description="Low complexity" evidence="4">
    <location>
        <begin position="118"/>
        <end position="127"/>
    </location>
</feature>
<accession>Q75AH9</accession>